<comment type="similarity">
    <text evidence="2">Belongs to the UPF0758 family.</text>
</comment>
<comment type="sequence caution" evidence="2">
    <conflict type="erroneous initiation">
        <sequence resource="EMBL-CDS" id="AAC22613"/>
    </conflict>
</comment>
<sequence>MENNDELMPREKLLAFGAKALSDYELLAIFLRTGIKGCPVMSLSKNVLTHFGPLHALLSADKKAFCSVKGLGITQFIQLQAITEMTKRYLKQDMLSTPIINDPETVKLFLLTELQHEEREVFMVLFLDNQHRLIKKERLFLGTIYVSAVYPREIIKEALYCNAAALILAHNHPSGITEPSYSDQLITKKIQDAAELMEIRVLDHLIVGKSDCYSFAENCLL</sequence>
<name>Y952_HAEIN</name>
<feature type="chain" id="PRO_0000190703" description="UPF0758 protein HI_0952">
    <location>
        <begin position="1"/>
        <end position="221"/>
    </location>
</feature>
<feature type="domain" description="MPN" evidence="1">
    <location>
        <begin position="99"/>
        <end position="221"/>
    </location>
</feature>
<feature type="short sequence motif" description="JAMM motif" evidence="1">
    <location>
        <begin position="170"/>
        <end position="183"/>
    </location>
</feature>
<feature type="binding site" evidence="1">
    <location>
        <position position="170"/>
    </location>
    <ligand>
        <name>Zn(2+)</name>
        <dbReference type="ChEBI" id="CHEBI:29105"/>
        <note>catalytic</note>
    </ligand>
</feature>
<feature type="binding site" evidence="1">
    <location>
        <position position="172"/>
    </location>
    <ligand>
        <name>Zn(2+)</name>
        <dbReference type="ChEBI" id="CHEBI:29105"/>
        <note>catalytic</note>
    </ligand>
</feature>
<feature type="binding site" evidence="1">
    <location>
        <position position="183"/>
    </location>
    <ligand>
        <name>Zn(2+)</name>
        <dbReference type="ChEBI" id="CHEBI:29105"/>
        <note>catalytic</note>
    </ligand>
</feature>
<protein>
    <recommendedName>
        <fullName>UPF0758 protein HI_0952</fullName>
    </recommendedName>
</protein>
<evidence type="ECO:0000255" key="1">
    <source>
        <dbReference type="PROSITE-ProRule" id="PRU01182"/>
    </source>
</evidence>
<evidence type="ECO:0000305" key="2"/>
<reference key="1">
    <citation type="journal article" date="1995" name="Science">
        <title>Whole-genome random sequencing and assembly of Haemophilus influenzae Rd.</title>
        <authorList>
            <person name="Fleischmann R.D."/>
            <person name="Adams M.D."/>
            <person name="White O."/>
            <person name="Clayton R.A."/>
            <person name="Kirkness E.F."/>
            <person name="Kerlavage A.R."/>
            <person name="Bult C.J."/>
            <person name="Tomb J.-F."/>
            <person name="Dougherty B.A."/>
            <person name="Merrick J.M."/>
            <person name="McKenney K."/>
            <person name="Sutton G.G."/>
            <person name="FitzHugh W."/>
            <person name="Fields C.A."/>
            <person name="Gocayne J.D."/>
            <person name="Scott J.D."/>
            <person name="Shirley R."/>
            <person name="Liu L.-I."/>
            <person name="Glodek A."/>
            <person name="Kelley J.M."/>
            <person name="Weidman J.F."/>
            <person name="Phillips C.A."/>
            <person name="Spriggs T."/>
            <person name="Hedblom E."/>
            <person name="Cotton M.D."/>
            <person name="Utterback T.R."/>
            <person name="Hanna M.C."/>
            <person name="Nguyen D.T."/>
            <person name="Saudek D.M."/>
            <person name="Brandon R.C."/>
            <person name="Fine L.D."/>
            <person name="Fritchman J.L."/>
            <person name="Fuhrmann J.L."/>
            <person name="Geoghagen N.S.M."/>
            <person name="Gnehm C.L."/>
            <person name="McDonald L.A."/>
            <person name="Small K.V."/>
            <person name="Fraser C.M."/>
            <person name="Smith H.O."/>
            <person name="Venter J.C."/>
        </authorList>
    </citation>
    <scope>NUCLEOTIDE SEQUENCE [LARGE SCALE GENOMIC DNA]</scope>
    <source>
        <strain>ATCC 51907 / DSM 11121 / KW20 / Rd</strain>
    </source>
</reference>
<proteinExistence type="inferred from homology"/>
<accession>P44952</accession>
<keyword id="KW-0378">Hydrolase</keyword>
<keyword id="KW-0479">Metal-binding</keyword>
<keyword id="KW-0482">Metalloprotease</keyword>
<keyword id="KW-0645">Protease</keyword>
<keyword id="KW-1185">Reference proteome</keyword>
<keyword id="KW-0862">Zinc</keyword>
<organism>
    <name type="scientific">Haemophilus influenzae (strain ATCC 51907 / DSM 11121 / KW20 / Rd)</name>
    <dbReference type="NCBI Taxonomy" id="71421"/>
    <lineage>
        <taxon>Bacteria</taxon>
        <taxon>Pseudomonadati</taxon>
        <taxon>Pseudomonadota</taxon>
        <taxon>Gammaproteobacteria</taxon>
        <taxon>Pasteurellales</taxon>
        <taxon>Pasteurellaceae</taxon>
        <taxon>Haemophilus</taxon>
    </lineage>
</organism>
<gene>
    <name type="ordered locus">HI_0952</name>
</gene>
<dbReference type="EMBL" id="L42023">
    <property type="protein sequence ID" value="AAC22613.1"/>
    <property type="status" value="ALT_INIT"/>
    <property type="molecule type" value="Genomic_DNA"/>
</dbReference>
<dbReference type="PIR" id="F64104">
    <property type="entry name" value="F64104"/>
</dbReference>
<dbReference type="RefSeq" id="NP_439113.2">
    <property type="nucleotide sequence ID" value="NC_000907.1"/>
</dbReference>
<dbReference type="SMR" id="P44952"/>
<dbReference type="STRING" id="71421.HI_0952"/>
<dbReference type="EnsemblBacteria" id="AAC22613">
    <property type="protein sequence ID" value="AAC22613"/>
    <property type="gene ID" value="HI_0952"/>
</dbReference>
<dbReference type="KEGG" id="hin:HI_0952"/>
<dbReference type="PATRIC" id="fig|71421.8.peg.994"/>
<dbReference type="eggNOG" id="COG2003">
    <property type="taxonomic scope" value="Bacteria"/>
</dbReference>
<dbReference type="HOGENOM" id="CLU_073529_0_2_6"/>
<dbReference type="OrthoDB" id="9804482at2"/>
<dbReference type="PhylomeDB" id="P44952"/>
<dbReference type="BioCyc" id="HINF71421:G1GJ1-993-MONOMER"/>
<dbReference type="Proteomes" id="UP000000579">
    <property type="component" value="Chromosome"/>
</dbReference>
<dbReference type="GO" id="GO:0046872">
    <property type="term" value="F:metal ion binding"/>
    <property type="evidence" value="ECO:0007669"/>
    <property type="project" value="UniProtKB-KW"/>
</dbReference>
<dbReference type="GO" id="GO:0008237">
    <property type="term" value="F:metallopeptidase activity"/>
    <property type="evidence" value="ECO:0007669"/>
    <property type="project" value="UniProtKB-KW"/>
</dbReference>
<dbReference type="GO" id="GO:0006508">
    <property type="term" value="P:proteolysis"/>
    <property type="evidence" value="ECO:0007669"/>
    <property type="project" value="UniProtKB-KW"/>
</dbReference>
<dbReference type="CDD" id="cd08071">
    <property type="entry name" value="MPN_DUF2466"/>
    <property type="match status" value="1"/>
</dbReference>
<dbReference type="Gene3D" id="3.40.140.10">
    <property type="entry name" value="Cytidine Deaminase, domain 2"/>
    <property type="match status" value="1"/>
</dbReference>
<dbReference type="InterPro" id="IPR037518">
    <property type="entry name" value="MPN"/>
</dbReference>
<dbReference type="InterPro" id="IPR025657">
    <property type="entry name" value="RadC_JAB"/>
</dbReference>
<dbReference type="InterPro" id="IPR010994">
    <property type="entry name" value="RuvA_2-like"/>
</dbReference>
<dbReference type="InterPro" id="IPR001405">
    <property type="entry name" value="UPF0758"/>
</dbReference>
<dbReference type="InterPro" id="IPR020891">
    <property type="entry name" value="UPF0758_CS"/>
</dbReference>
<dbReference type="InterPro" id="IPR046778">
    <property type="entry name" value="UPF0758_N"/>
</dbReference>
<dbReference type="NCBIfam" id="NF000642">
    <property type="entry name" value="PRK00024.1"/>
    <property type="match status" value="1"/>
</dbReference>
<dbReference type="NCBIfam" id="TIGR00608">
    <property type="entry name" value="radc"/>
    <property type="match status" value="1"/>
</dbReference>
<dbReference type="PANTHER" id="PTHR30471">
    <property type="entry name" value="DNA REPAIR PROTEIN RADC"/>
    <property type="match status" value="1"/>
</dbReference>
<dbReference type="PANTHER" id="PTHR30471:SF3">
    <property type="entry name" value="UPF0758 PROTEIN YEES-RELATED"/>
    <property type="match status" value="1"/>
</dbReference>
<dbReference type="Pfam" id="PF04002">
    <property type="entry name" value="RadC"/>
    <property type="match status" value="1"/>
</dbReference>
<dbReference type="Pfam" id="PF20582">
    <property type="entry name" value="UPF0758_N"/>
    <property type="match status" value="1"/>
</dbReference>
<dbReference type="SUPFAM" id="SSF47781">
    <property type="entry name" value="RuvA domain 2-like"/>
    <property type="match status" value="1"/>
</dbReference>
<dbReference type="PROSITE" id="PS50249">
    <property type="entry name" value="MPN"/>
    <property type="match status" value="1"/>
</dbReference>
<dbReference type="PROSITE" id="PS01302">
    <property type="entry name" value="UPF0758"/>
    <property type="match status" value="1"/>
</dbReference>